<sequence length="110" mass="13016">MASIIYSPKDIFEQDFKVSMRGYDKKEVDVFLDDVIKDYENYLEQIEKLQMENRRLQQALDKKESEASNVRNSGTAMYNQKPIAQSATNFDILKRISRLEKEVFGRQIRE</sequence>
<protein>
    <recommendedName>
        <fullName evidence="1">Cell cycle protein GpsB</fullName>
    </recommendedName>
    <alternativeName>
        <fullName evidence="1">Guiding PBP1-shuttling protein</fullName>
    </alternativeName>
</protein>
<organism>
    <name type="scientific">Streptococcus agalactiae serotype V (strain ATCC BAA-611 / 2603 V/R)</name>
    <dbReference type="NCBI Taxonomy" id="208435"/>
    <lineage>
        <taxon>Bacteria</taxon>
        <taxon>Bacillati</taxon>
        <taxon>Bacillota</taxon>
        <taxon>Bacilli</taxon>
        <taxon>Lactobacillales</taxon>
        <taxon>Streptococcaceae</taxon>
        <taxon>Streptococcus</taxon>
    </lineage>
</organism>
<comment type="function">
    <text evidence="1">Divisome component that associates with the complex late in its assembly, after the Z-ring is formed, and is dependent on DivIC and PBP2B for its recruitment to the divisome. Together with EzrA, is a key component of the system that regulates PBP1 localization during cell cycle progression. Its main role could be the removal of PBP1 from the cell pole after pole maturation is completed. Also contributes to the recruitment of PBP1 to the division complex. Not essential for septum formation.</text>
</comment>
<comment type="subunit">
    <text evidence="1">Forms polymers through the coiled coil domains. Interacts with PBP1, MreC and EzrA.</text>
</comment>
<comment type="subcellular location">
    <subcellularLocation>
        <location evidence="1">Cytoplasm</location>
    </subcellularLocation>
    <text evidence="1">Shuttles between the lateral wall and the division site in a cell cycle-dependent manner.</text>
</comment>
<comment type="similarity">
    <text evidence="1">Belongs to the GpsB family.</text>
</comment>
<feature type="chain" id="PRO_0000337950" description="Cell cycle protein GpsB">
    <location>
        <begin position="1"/>
        <end position="110"/>
    </location>
</feature>
<feature type="coiled-coil region" evidence="1">
    <location>
        <begin position="32"/>
        <end position="73"/>
    </location>
</feature>
<name>GPSB_STRA5</name>
<evidence type="ECO:0000255" key="1">
    <source>
        <dbReference type="HAMAP-Rule" id="MF_02011"/>
    </source>
</evidence>
<proteinExistence type="inferred from homology"/>
<dbReference type="EMBL" id="AE009948">
    <property type="protein sequence ID" value="AAM99209.1"/>
    <property type="molecule type" value="Genomic_DNA"/>
</dbReference>
<dbReference type="RefSeq" id="NP_687337.1">
    <property type="nucleotide sequence ID" value="NC_004116.1"/>
</dbReference>
<dbReference type="RefSeq" id="WP_000146544.1">
    <property type="nucleotide sequence ID" value="NC_004116.1"/>
</dbReference>
<dbReference type="SMR" id="Q8E1Q1"/>
<dbReference type="STRING" id="208435.SAG0302"/>
<dbReference type="GeneID" id="66885274"/>
<dbReference type="KEGG" id="sag:SAG0302"/>
<dbReference type="PATRIC" id="fig|208435.3.peg.299"/>
<dbReference type="HOGENOM" id="CLU_140309_1_0_9"/>
<dbReference type="OrthoDB" id="389699at2"/>
<dbReference type="Proteomes" id="UP000000821">
    <property type="component" value="Chromosome"/>
</dbReference>
<dbReference type="GO" id="GO:0005737">
    <property type="term" value="C:cytoplasm"/>
    <property type="evidence" value="ECO:0007669"/>
    <property type="project" value="UniProtKB-SubCell"/>
</dbReference>
<dbReference type="GO" id="GO:0051301">
    <property type="term" value="P:cell division"/>
    <property type="evidence" value="ECO:0007669"/>
    <property type="project" value="UniProtKB-UniRule"/>
</dbReference>
<dbReference type="GO" id="GO:0008360">
    <property type="term" value="P:regulation of cell shape"/>
    <property type="evidence" value="ECO:0007669"/>
    <property type="project" value="UniProtKB-UniRule"/>
</dbReference>
<dbReference type="Gene3D" id="6.10.250.660">
    <property type="match status" value="1"/>
</dbReference>
<dbReference type="HAMAP" id="MF_02011">
    <property type="entry name" value="GpsB"/>
    <property type="match status" value="1"/>
</dbReference>
<dbReference type="InterPro" id="IPR011229">
    <property type="entry name" value="Cell_cycle_GpsB"/>
</dbReference>
<dbReference type="InterPro" id="IPR019933">
    <property type="entry name" value="DivIVA_domain"/>
</dbReference>
<dbReference type="InterPro" id="IPR007793">
    <property type="entry name" value="DivIVA_fam"/>
</dbReference>
<dbReference type="NCBIfam" id="TIGR03544">
    <property type="entry name" value="DivI1A_domain"/>
    <property type="match status" value="1"/>
</dbReference>
<dbReference type="NCBIfam" id="NF010725">
    <property type="entry name" value="PRK14127.1"/>
    <property type="match status" value="1"/>
</dbReference>
<dbReference type="PANTHER" id="PTHR35794:SF1">
    <property type="entry name" value="CELL CYCLE PROTEIN GPSB"/>
    <property type="match status" value="1"/>
</dbReference>
<dbReference type="PANTHER" id="PTHR35794">
    <property type="entry name" value="CELL DIVISION PROTEIN DIVIVA"/>
    <property type="match status" value="1"/>
</dbReference>
<dbReference type="Pfam" id="PF05103">
    <property type="entry name" value="DivIVA"/>
    <property type="match status" value="1"/>
</dbReference>
<dbReference type="PIRSF" id="PIRSF029938">
    <property type="entry name" value="UCP029938"/>
    <property type="match status" value="1"/>
</dbReference>
<accession>Q8E1Q1</accession>
<keyword id="KW-0131">Cell cycle</keyword>
<keyword id="KW-0132">Cell division</keyword>
<keyword id="KW-0133">Cell shape</keyword>
<keyword id="KW-0175">Coiled coil</keyword>
<keyword id="KW-0963">Cytoplasm</keyword>
<keyword id="KW-1185">Reference proteome</keyword>
<reference key="1">
    <citation type="journal article" date="2002" name="Proc. Natl. Acad. Sci. U.S.A.">
        <title>Complete genome sequence and comparative genomic analysis of an emerging human pathogen, serotype V Streptococcus agalactiae.</title>
        <authorList>
            <person name="Tettelin H."/>
            <person name="Masignani V."/>
            <person name="Cieslewicz M.J."/>
            <person name="Eisen J.A."/>
            <person name="Peterson S.N."/>
            <person name="Wessels M.R."/>
            <person name="Paulsen I.T."/>
            <person name="Nelson K.E."/>
            <person name="Margarit I."/>
            <person name="Read T.D."/>
            <person name="Madoff L.C."/>
            <person name="Wolf A.M."/>
            <person name="Beanan M.J."/>
            <person name="Brinkac L.M."/>
            <person name="Daugherty S.C."/>
            <person name="DeBoy R.T."/>
            <person name="Durkin A.S."/>
            <person name="Kolonay J.F."/>
            <person name="Madupu R."/>
            <person name="Lewis M.R."/>
            <person name="Radune D."/>
            <person name="Fedorova N.B."/>
            <person name="Scanlan D."/>
            <person name="Khouri H.M."/>
            <person name="Mulligan S."/>
            <person name="Carty H.A."/>
            <person name="Cline R.T."/>
            <person name="Van Aken S.E."/>
            <person name="Gill J."/>
            <person name="Scarselli M."/>
            <person name="Mora M."/>
            <person name="Iacobini E.T."/>
            <person name="Brettoni C."/>
            <person name="Galli G."/>
            <person name="Mariani M."/>
            <person name="Vegni F."/>
            <person name="Maione D."/>
            <person name="Rinaudo D."/>
            <person name="Rappuoli R."/>
            <person name="Telford J.L."/>
            <person name="Kasper D.L."/>
            <person name="Grandi G."/>
            <person name="Fraser C.M."/>
        </authorList>
    </citation>
    <scope>NUCLEOTIDE SEQUENCE [LARGE SCALE GENOMIC DNA]</scope>
    <source>
        <strain>ATCC BAA-611 / 2603 V/R</strain>
    </source>
</reference>
<gene>
    <name evidence="1" type="primary">gpsB</name>
    <name type="ordered locus">SAG0302</name>
</gene>